<dbReference type="EMBL" id="AM747720">
    <property type="protein sequence ID" value="CAR50734.1"/>
    <property type="molecule type" value="Genomic_DNA"/>
</dbReference>
<dbReference type="RefSeq" id="WP_012492323.1">
    <property type="nucleotide sequence ID" value="NC_011000.1"/>
</dbReference>
<dbReference type="SMR" id="B4E7D1"/>
<dbReference type="KEGG" id="bcj:BCAL0423"/>
<dbReference type="eggNOG" id="COG0593">
    <property type="taxonomic scope" value="Bacteria"/>
</dbReference>
<dbReference type="HOGENOM" id="CLU_026910_0_1_4"/>
<dbReference type="Proteomes" id="UP000001035">
    <property type="component" value="Chromosome 1"/>
</dbReference>
<dbReference type="GO" id="GO:0005737">
    <property type="term" value="C:cytoplasm"/>
    <property type="evidence" value="ECO:0007669"/>
    <property type="project" value="UniProtKB-SubCell"/>
</dbReference>
<dbReference type="GO" id="GO:0005886">
    <property type="term" value="C:plasma membrane"/>
    <property type="evidence" value="ECO:0007669"/>
    <property type="project" value="TreeGrafter"/>
</dbReference>
<dbReference type="GO" id="GO:0005524">
    <property type="term" value="F:ATP binding"/>
    <property type="evidence" value="ECO:0007669"/>
    <property type="project" value="UniProtKB-UniRule"/>
</dbReference>
<dbReference type="GO" id="GO:0016887">
    <property type="term" value="F:ATP hydrolysis activity"/>
    <property type="evidence" value="ECO:0007669"/>
    <property type="project" value="InterPro"/>
</dbReference>
<dbReference type="GO" id="GO:0003688">
    <property type="term" value="F:DNA replication origin binding"/>
    <property type="evidence" value="ECO:0007669"/>
    <property type="project" value="UniProtKB-UniRule"/>
</dbReference>
<dbReference type="GO" id="GO:0008289">
    <property type="term" value="F:lipid binding"/>
    <property type="evidence" value="ECO:0007669"/>
    <property type="project" value="UniProtKB-KW"/>
</dbReference>
<dbReference type="GO" id="GO:0006270">
    <property type="term" value="P:DNA replication initiation"/>
    <property type="evidence" value="ECO:0007669"/>
    <property type="project" value="UniProtKB-UniRule"/>
</dbReference>
<dbReference type="GO" id="GO:0006275">
    <property type="term" value="P:regulation of DNA replication"/>
    <property type="evidence" value="ECO:0007669"/>
    <property type="project" value="UniProtKB-UniRule"/>
</dbReference>
<dbReference type="CDD" id="cd00009">
    <property type="entry name" value="AAA"/>
    <property type="match status" value="1"/>
</dbReference>
<dbReference type="CDD" id="cd06571">
    <property type="entry name" value="Bac_DnaA_C"/>
    <property type="match status" value="1"/>
</dbReference>
<dbReference type="FunFam" id="1.10.8.60:FF:000003">
    <property type="entry name" value="Chromosomal replication initiator protein DnaA"/>
    <property type="match status" value="1"/>
</dbReference>
<dbReference type="FunFam" id="3.40.50.300:FF:000668">
    <property type="entry name" value="Chromosomal replication initiator protein DnaA"/>
    <property type="match status" value="1"/>
</dbReference>
<dbReference type="Gene3D" id="1.10.1750.10">
    <property type="match status" value="1"/>
</dbReference>
<dbReference type="Gene3D" id="1.10.8.60">
    <property type="match status" value="1"/>
</dbReference>
<dbReference type="Gene3D" id="3.30.300.180">
    <property type="match status" value="1"/>
</dbReference>
<dbReference type="Gene3D" id="3.40.50.300">
    <property type="entry name" value="P-loop containing nucleotide triphosphate hydrolases"/>
    <property type="match status" value="1"/>
</dbReference>
<dbReference type="HAMAP" id="MF_00377">
    <property type="entry name" value="DnaA_bact"/>
    <property type="match status" value="1"/>
</dbReference>
<dbReference type="InterPro" id="IPR003593">
    <property type="entry name" value="AAA+_ATPase"/>
</dbReference>
<dbReference type="InterPro" id="IPR001957">
    <property type="entry name" value="Chromosome_initiator_DnaA"/>
</dbReference>
<dbReference type="InterPro" id="IPR020591">
    <property type="entry name" value="Chromosome_initiator_DnaA-like"/>
</dbReference>
<dbReference type="InterPro" id="IPR018312">
    <property type="entry name" value="Chromosome_initiator_DnaA_CS"/>
</dbReference>
<dbReference type="InterPro" id="IPR013159">
    <property type="entry name" value="DnaA_C"/>
</dbReference>
<dbReference type="InterPro" id="IPR013317">
    <property type="entry name" value="DnaA_dom"/>
</dbReference>
<dbReference type="InterPro" id="IPR024633">
    <property type="entry name" value="DnaA_N_dom"/>
</dbReference>
<dbReference type="InterPro" id="IPR038454">
    <property type="entry name" value="DnaA_N_sf"/>
</dbReference>
<dbReference type="InterPro" id="IPR027417">
    <property type="entry name" value="P-loop_NTPase"/>
</dbReference>
<dbReference type="InterPro" id="IPR010921">
    <property type="entry name" value="Trp_repressor/repl_initiator"/>
</dbReference>
<dbReference type="NCBIfam" id="TIGR00362">
    <property type="entry name" value="DnaA"/>
    <property type="match status" value="1"/>
</dbReference>
<dbReference type="PANTHER" id="PTHR30050">
    <property type="entry name" value="CHROMOSOMAL REPLICATION INITIATOR PROTEIN DNAA"/>
    <property type="match status" value="1"/>
</dbReference>
<dbReference type="PANTHER" id="PTHR30050:SF2">
    <property type="entry name" value="CHROMOSOMAL REPLICATION INITIATOR PROTEIN DNAA"/>
    <property type="match status" value="1"/>
</dbReference>
<dbReference type="Pfam" id="PF00308">
    <property type="entry name" value="Bac_DnaA"/>
    <property type="match status" value="1"/>
</dbReference>
<dbReference type="Pfam" id="PF08299">
    <property type="entry name" value="Bac_DnaA_C"/>
    <property type="match status" value="1"/>
</dbReference>
<dbReference type="Pfam" id="PF11638">
    <property type="entry name" value="DnaA_N"/>
    <property type="match status" value="1"/>
</dbReference>
<dbReference type="PRINTS" id="PR00051">
    <property type="entry name" value="DNAA"/>
</dbReference>
<dbReference type="SMART" id="SM00382">
    <property type="entry name" value="AAA"/>
    <property type="match status" value="1"/>
</dbReference>
<dbReference type="SMART" id="SM00760">
    <property type="entry name" value="Bac_DnaA_C"/>
    <property type="match status" value="1"/>
</dbReference>
<dbReference type="SUPFAM" id="SSF52540">
    <property type="entry name" value="P-loop containing nucleoside triphosphate hydrolases"/>
    <property type="match status" value="1"/>
</dbReference>
<dbReference type="SUPFAM" id="SSF48295">
    <property type="entry name" value="TrpR-like"/>
    <property type="match status" value="1"/>
</dbReference>
<dbReference type="PROSITE" id="PS01008">
    <property type="entry name" value="DNAA"/>
    <property type="match status" value="1"/>
</dbReference>
<evidence type="ECO:0000255" key="1">
    <source>
        <dbReference type="HAMAP-Rule" id="MF_00377"/>
    </source>
</evidence>
<evidence type="ECO:0000256" key="2">
    <source>
        <dbReference type="SAM" id="MobiDB-lite"/>
    </source>
</evidence>
<keyword id="KW-0067">ATP-binding</keyword>
<keyword id="KW-0963">Cytoplasm</keyword>
<keyword id="KW-0235">DNA replication</keyword>
<keyword id="KW-0238">DNA-binding</keyword>
<keyword id="KW-0446">Lipid-binding</keyword>
<keyword id="KW-0547">Nucleotide-binding</keyword>
<organism>
    <name type="scientific">Burkholderia cenocepacia (strain ATCC BAA-245 / DSM 16553 / LMG 16656 / NCTC 13227 / J2315 / CF5610)</name>
    <name type="common">Burkholderia cepacia (strain J2315)</name>
    <dbReference type="NCBI Taxonomy" id="216591"/>
    <lineage>
        <taxon>Bacteria</taxon>
        <taxon>Pseudomonadati</taxon>
        <taxon>Pseudomonadota</taxon>
        <taxon>Betaproteobacteria</taxon>
        <taxon>Burkholderiales</taxon>
        <taxon>Burkholderiaceae</taxon>
        <taxon>Burkholderia</taxon>
        <taxon>Burkholderia cepacia complex</taxon>
    </lineage>
</organism>
<sequence>MNDFWQHCSALLERELTPQQYVTWIKPLAPVAFDASANTLSIAAPNRFKLDWVKSQFSGRIADLAREFWNTPIEVQFVLDPKAGMRSAPAGAAPAAPRAPLAPNGPAATVAAIAANLTANASAAPAAPADVPMTPSAAAARHLNADDADIDLPSLPAHEAAAGRRTWRPGPGAAPANGGEADSMYERSKLNPVLTFDNFVTGKANQLARAAAIQVADNPGISYNPLFLYGGVGLGKTHLIHAIGNQLLLDKAGARIRYIHAEQYVSDVVKAYQRKAFDDFKRYYHSLDLLLIDDIQFFSGKSRTQEEFFYAFEALVANKAQVIITSDTYPKEISGIDDRLISRFDSGLTVAIEPPELEMRVAILMRKAQSEGVNLSEDVAFFVAKHLRSNVRELEGALRKILAYSKFHGREISIELTKEALKDLLTVQNRQISVENIQKTVADFYNIKVADMYSKKRPANIARPRQIAMYLAKELTQKSLPEIGELFGGRDHTTVLHAVRKIADERSKDAQLNHELHVLEQTLKG</sequence>
<gene>
    <name evidence="1" type="primary">dnaA</name>
    <name type="ordered locus">BceJ2315_04210</name>
    <name type="ORF">BCAL0423</name>
</gene>
<name>DNAA_BURCJ</name>
<accession>B4E7D1</accession>
<protein>
    <recommendedName>
        <fullName evidence="1">Chromosomal replication initiator protein DnaA</fullName>
    </recommendedName>
</protein>
<comment type="function">
    <text evidence="1">Plays an essential role in the initiation and regulation of chromosomal replication. ATP-DnaA binds to the origin of replication (oriC) to initiate formation of the DNA replication initiation complex once per cell cycle. Binds the DnaA box (a 9 base pair repeat at the origin) and separates the double-stranded (ds)DNA. Forms a right-handed helical filament on oriC DNA; dsDNA binds to the exterior of the filament while single-stranded (ss)DNA is stabiized in the filament's interior. The ATP-DnaA-oriC complex binds and stabilizes one strand of the AT-rich DNA unwinding element (DUE), permitting loading of DNA polymerase. After initiation quickly degrades to an ADP-DnaA complex that is not apt for DNA replication. Binds acidic phospholipids.</text>
</comment>
<comment type="subunit">
    <text evidence="1">Oligomerizes as a right-handed, spiral filament on DNA at oriC.</text>
</comment>
<comment type="subcellular location">
    <subcellularLocation>
        <location evidence="1">Cytoplasm</location>
    </subcellularLocation>
</comment>
<comment type="domain">
    <text evidence="1">Domain I is involved in oligomerization and binding regulators, domain II is flexibile and of varying length in different bacteria, domain III forms the AAA+ region, while domain IV binds dsDNA.</text>
</comment>
<comment type="similarity">
    <text evidence="1">Belongs to the DnaA family.</text>
</comment>
<reference key="1">
    <citation type="journal article" date="2009" name="J. Bacteriol.">
        <title>The genome of Burkholderia cenocepacia J2315, an epidemic pathogen of cystic fibrosis patients.</title>
        <authorList>
            <person name="Holden M.T."/>
            <person name="Seth-Smith H.M."/>
            <person name="Crossman L.C."/>
            <person name="Sebaihia M."/>
            <person name="Bentley S.D."/>
            <person name="Cerdeno-Tarraga A.M."/>
            <person name="Thomson N.R."/>
            <person name="Bason N."/>
            <person name="Quail M.A."/>
            <person name="Sharp S."/>
            <person name="Cherevach I."/>
            <person name="Churcher C."/>
            <person name="Goodhead I."/>
            <person name="Hauser H."/>
            <person name="Holroyd N."/>
            <person name="Mungall K."/>
            <person name="Scott P."/>
            <person name="Walker D."/>
            <person name="White B."/>
            <person name="Rose H."/>
            <person name="Iversen P."/>
            <person name="Mil-Homens D."/>
            <person name="Rocha E.P."/>
            <person name="Fialho A.M."/>
            <person name="Baldwin A."/>
            <person name="Dowson C."/>
            <person name="Barrell B.G."/>
            <person name="Govan J.R."/>
            <person name="Vandamme P."/>
            <person name="Hart C.A."/>
            <person name="Mahenthiralingam E."/>
            <person name="Parkhill J."/>
        </authorList>
    </citation>
    <scope>NUCLEOTIDE SEQUENCE [LARGE SCALE GENOMIC DNA]</scope>
    <source>
        <strain>ATCC BAA-245 / DSM 16553 / LMG 16656 / NCTC 13227 / J2315 / CF5610</strain>
    </source>
</reference>
<feature type="chain" id="PRO_1000121957" description="Chromosomal replication initiator protein DnaA">
    <location>
        <begin position="1"/>
        <end position="525"/>
    </location>
</feature>
<feature type="region of interest" description="Domain I, interacts with DnaA modulators" evidence="1">
    <location>
        <begin position="1"/>
        <end position="71"/>
    </location>
</feature>
<feature type="region of interest" description="Domain II" evidence="1">
    <location>
        <begin position="71"/>
        <end position="188"/>
    </location>
</feature>
<feature type="region of interest" description="Disordered" evidence="2">
    <location>
        <begin position="160"/>
        <end position="182"/>
    </location>
</feature>
<feature type="region of interest" description="Domain III, AAA+ region" evidence="1">
    <location>
        <begin position="189"/>
        <end position="405"/>
    </location>
</feature>
<feature type="region of interest" description="Domain IV, binds dsDNA" evidence="1">
    <location>
        <begin position="406"/>
        <end position="525"/>
    </location>
</feature>
<feature type="compositionally biased region" description="Low complexity" evidence="2">
    <location>
        <begin position="169"/>
        <end position="181"/>
    </location>
</feature>
<feature type="binding site" evidence="1">
    <location>
        <position position="233"/>
    </location>
    <ligand>
        <name>ATP</name>
        <dbReference type="ChEBI" id="CHEBI:30616"/>
    </ligand>
</feature>
<feature type="binding site" evidence="1">
    <location>
        <position position="235"/>
    </location>
    <ligand>
        <name>ATP</name>
        <dbReference type="ChEBI" id="CHEBI:30616"/>
    </ligand>
</feature>
<feature type="binding site" evidence="1">
    <location>
        <position position="236"/>
    </location>
    <ligand>
        <name>ATP</name>
        <dbReference type="ChEBI" id="CHEBI:30616"/>
    </ligand>
</feature>
<feature type="binding site" evidence="1">
    <location>
        <position position="237"/>
    </location>
    <ligand>
        <name>ATP</name>
        <dbReference type="ChEBI" id="CHEBI:30616"/>
    </ligand>
</feature>
<proteinExistence type="inferred from homology"/>